<organism>
    <name type="scientific">Conus arenatus</name>
    <name type="common">Sand-dusted cone</name>
    <dbReference type="NCBI Taxonomy" id="89451"/>
    <lineage>
        <taxon>Eukaryota</taxon>
        <taxon>Metazoa</taxon>
        <taxon>Spiralia</taxon>
        <taxon>Lophotrochozoa</taxon>
        <taxon>Mollusca</taxon>
        <taxon>Gastropoda</taxon>
        <taxon>Caenogastropoda</taxon>
        <taxon>Neogastropoda</taxon>
        <taxon>Conoidea</taxon>
        <taxon>Conidae</taxon>
        <taxon>Conus</taxon>
    </lineage>
</organism>
<accession>Q9BP99</accession>
<feature type="signal peptide" evidence="2">
    <location>
        <begin position="1"/>
        <end position="22"/>
    </location>
</feature>
<feature type="propeptide" id="PRO_0000404766" evidence="1">
    <location>
        <begin position="23"/>
        <end position="51"/>
    </location>
</feature>
<feature type="peptide" id="PRO_0000404767" description="Omega-conotoxin-like ArMKLT1-02">
    <location>
        <begin position="52"/>
        <end position="84"/>
    </location>
</feature>
<feature type="disulfide bond" evidence="1">
    <location>
        <begin position="53"/>
        <end position="71"/>
    </location>
</feature>
<feature type="disulfide bond" evidence="1">
    <location>
        <begin position="60"/>
        <end position="75"/>
    </location>
</feature>
<feature type="disulfide bond" evidence="1">
    <location>
        <begin position="70"/>
        <end position="79"/>
    </location>
</feature>
<evidence type="ECO:0000250" key="1"/>
<evidence type="ECO:0000255" key="2"/>
<evidence type="ECO:0000305" key="3"/>
<name>O163_CONAE</name>
<comment type="function">
    <text evidence="1">Omega-conotoxins act at presynaptic membranes, they bind and block voltage-gated calcium channels (Cav).</text>
</comment>
<comment type="subcellular location">
    <subcellularLocation>
        <location evidence="1">Secreted</location>
    </subcellularLocation>
</comment>
<comment type="tissue specificity">
    <text>Expressed by the venom duct.</text>
</comment>
<comment type="domain">
    <text evidence="1">The presence of a 'disulfide through disulfide knot' structurally defines this protein as a knottin.</text>
</comment>
<comment type="domain">
    <text>The cysteine framework is VI/VII (C-C-CC-C-C).</text>
</comment>
<comment type="similarity">
    <text evidence="3">Belongs to the conotoxin O1 superfamily.</text>
</comment>
<proteinExistence type="evidence at transcript level"/>
<sequence>MKVTCMMIVAVLFLTAWTFVTADDSISALEDLFAKAHDKMENSEASPLNERDCRALGEYCGLPYVHNSRCCSQLCGFICVPESP</sequence>
<reference key="1">
    <citation type="journal article" date="2001" name="Mol. Biol. Evol.">
        <title>Mechanisms for evolving hypervariability: the case of conopeptides.</title>
        <authorList>
            <person name="Conticello S.G."/>
            <person name="Gilad Y."/>
            <person name="Avidan N."/>
            <person name="Ben-Asher E."/>
            <person name="Levy Z."/>
            <person name="Fainzilber M."/>
        </authorList>
    </citation>
    <scope>NUCLEOTIDE SEQUENCE [MRNA]</scope>
    <source>
        <tissue>Venom duct</tissue>
    </source>
</reference>
<protein>
    <recommendedName>
        <fullName>Omega-conotoxin-like ArMKLT1-02</fullName>
    </recommendedName>
</protein>
<keyword id="KW-0108">Calcium channel impairing toxin</keyword>
<keyword id="KW-1015">Disulfide bond</keyword>
<keyword id="KW-0872">Ion channel impairing toxin</keyword>
<keyword id="KW-0960">Knottin</keyword>
<keyword id="KW-0528">Neurotoxin</keyword>
<keyword id="KW-0638">Presynaptic neurotoxin</keyword>
<keyword id="KW-0964">Secreted</keyword>
<keyword id="KW-0732">Signal</keyword>
<keyword id="KW-0800">Toxin</keyword>
<keyword id="KW-1218">Voltage-gated calcium channel impairing toxin</keyword>
<dbReference type="EMBL" id="AF215039">
    <property type="protein sequence ID" value="AAG60467.1"/>
    <property type="molecule type" value="mRNA"/>
</dbReference>
<dbReference type="SMR" id="Q9BP99"/>
<dbReference type="ConoServer" id="726">
    <property type="toxin name" value="Ar6.3 precursor"/>
</dbReference>
<dbReference type="GO" id="GO:0005576">
    <property type="term" value="C:extracellular region"/>
    <property type="evidence" value="ECO:0007669"/>
    <property type="project" value="UniProtKB-SubCell"/>
</dbReference>
<dbReference type="GO" id="GO:0044231">
    <property type="term" value="C:host cell presynaptic membrane"/>
    <property type="evidence" value="ECO:0007669"/>
    <property type="project" value="UniProtKB-KW"/>
</dbReference>
<dbReference type="GO" id="GO:0005246">
    <property type="term" value="F:calcium channel regulator activity"/>
    <property type="evidence" value="ECO:0007669"/>
    <property type="project" value="UniProtKB-KW"/>
</dbReference>
<dbReference type="GO" id="GO:0008200">
    <property type="term" value="F:ion channel inhibitor activity"/>
    <property type="evidence" value="ECO:0007669"/>
    <property type="project" value="InterPro"/>
</dbReference>
<dbReference type="GO" id="GO:0090729">
    <property type="term" value="F:toxin activity"/>
    <property type="evidence" value="ECO:0007669"/>
    <property type="project" value="UniProtKB-KW"/>
</dbReference>
<dbReference type="InterPro" id="IPR004214">
    <property type="entry name" value="Conotoxin"/>
</dbReference>
<dbReference type="InterPro" id="IPR012321">
    <property type="entry name" value="Conotoxin_omega-typ_CS"/>
</dbReference>
<dbReference type="Pfam" id="PF02950">
    <property type="entry name" value="Conotoxin"/>
    <property type="match status" value="1"/>
</dbReference>
<dbReference type="SUPFAM" id="SSF57059">
    <property type="entry name" value="omega toxin-like"/>
    <property type="match status" value="1"/>
</dbReference>
<dbReference type="PROSITE" id="PS60004">
    <property type="entry name" value="OMEGA_CONOTOXIN"/>
    <property type="match status" value="1"/>
</dbReference>